<reference key="1">
    <citation type="submission" date="2001-09" db="EMBL/GenBank/DDBJ databases">
        <title>Arabidopsis thaliana transcription factor WRKY69.</title>
        <authorList>
            <person name="Ulker B."/>
            <person name="Kushnir S."/>
            <person name="Somssich I.E."/>
        </authorList>
    </citation>
    <scope>NUCLEOTIDE SEQUENCE [MRNA] (ISOFORM 1)</scope>
    <source>
        <strain>cv. Columbia</strain>
        <tissue>Flower</tissue>
    </source>
</reference>
<reference key="2">
    <citation type="journal article" date="2000" name="Nature">
        <title>Sequence and analysis of chromosome 3 of the plant Arabidopsis thaliana.</title>
        <authorList>
            <person name="Salanoubat M."/>
            <person name="Lemcke K."/>
            <person name="Rieger M."/>
            <person name="Ansorge W."/>
            <person name="Unseld M."/>
            <person name="Fartmann B."/>
            <person name="Valle G."/>
            <person name="Bloecker H."/>
            <person name="Perez-Alonso M."/>
            <person name="Obermaier B."/>
            <person name="Delseny M."/>
            <person name="Boutry M."/>
            <person name="Grivell L.A."/>
            <person name="Mache R."/>
            <person name="Puigdomenech P."/>
            <person name="De Simone V."/>
            <person name="Choisne N."/>
            <person name="Artiguenave F."/>
            <person name="Robert C."/>
            <person name="Brottier P."/>
            <person name="Wincker P."/>
            <person name="Cattolico L."/>
            <person name="Weissenbach J."/>
            <person name="Saurin W."/>
            <person name="Quetier F."/>
            <person name="Schaefer M."/>
            <person name="Mueller-Auer S."/>
            <person name="Gabel C."/>
            <person name="Fuchs M."/>
            <person name="Benes V."/>
            <person name="Wurmbach E."/>
            <person name="Drzonek H."/>
            <person name="Erfle H."/>
            <person name="Jordan N."/>
            <person name="Bangert S."/>
            <person name="Wiedelmann R."/>
            <person name="Kranz H."/>
            <person name="Voss H."/>
            <person name="Holland R."/>
            <person name="Brandt P."/>
            <person name="Nyakatura G."/>
            <person name="Vezzi A."/>
            <person name="D'Angelo M."/>
            <person name="Pallavicini A."/>
            <person name="Toppo S."/>
            <person name="Simionati B."/>
            <person name="Conrad A."/>
            <person name="Hornischer K."/>
            <person name="Kauer G."/>
            <person name="Loehnert T.-H."/>
            <person name="Nordsiek G."/>
            <person name="Reichelt J."/>
            <person name="Scharfe M."/>
            <person name="Schoen O."/>
            <person name="Bargues M."/>
            <person name="Terol J."/>
            <person name="Climent J."/>
            <person name="Navarro P."/>
            <person name="Collado C."/>
            <person name="Perez-Perez A."/>
            <person name="Ottenwaelder B."/>
            <person name="Duchemin D."/>
            <person name="Cooke R."/>
            <person name="Laudie M."/>
            <person name="Berger-Llauro C."/>
            <person name="Purnelle B."/>
            <person name="Masuy D."/>
            <person name="de Haan M."/>
            <person name="Maarse A.C."/>
            <person name="Alcaraz J.-P."/>
            <person name="Cottet A."/>
            <person name="Casacuberta E."/>
            <person name="Monfort A."/>
            <person name="Argiriou A."/>
            <person name="Flores M."/>
            <person name="Liguori R."/>
            <person name="Vitale D."/>
            <person name="Mannhaupt G."/>
            <person name="Haase D."/>
            <person name="Schoof H."/>
            <person name="Rudd S."/>
            <person name="Zaccaria P."/>
            <person name="Mewes H.-W."/>
            <person name="Mayer K.F.X."/>
            <person name="Kaul S."/>
            <person name="Town C.D."/>
            <person name="Koo H.L."/>
            <person name="Tallon L.J."/>
            <person name="Jenkins J."/>
            <person name="Rooney T."/>
            <person name="Rizzo M."/>
            <person name="Walts A."/>
            <person name="Utterback T."/>
            <person name="Fujii C.Y."/>
            <person name="Shea T.P."/>
            <person name="Creasy T.H."/>
            <person name="Haas B."/>
            <person name="Maiti R."/>
            <person name="Wu D."/>
            <person name="Peterson J."/>
            <person name="Van Aken S."/>
            <person name="Pai G."/>
            <person name="Militscher J."/>
            <person name="Sellers P."/>
            <person name="Gill J.E."/>
            <person name="Feldblyum T.V."/>
            <person name="Preuss D."/>
            <person name="Lin X."/>
            <person name="Nierman W.C."/>
            <person name="Salzberg S.L."/>
            <person name="White O."/>
            <person name="Venter J.C."/>
            <person name="Fraser C.M."/>
            <person name="Kaneko T."/>
            <person name="Nakamura Y."/>
            <person name="Sato S."/>
            <person name="Kato T."/>
            <person name="Asamizu E."/>
            <person name="Sasamoto S."/>
            <person name="Kimura T."/>
            <person name="Idesawa K."/>
            <person name="Kawashima K."/>
            <person name="Kishida Y."/>
            <person name="Kiyokawa C."/>
            <person name="Kohara M."/>
            <person name="Matsumoto M."/>
            <person name="Matsuno A."/>
            <person name="Muraki A."/>
            <person name="Nakayama S."/>
            <person name="Nakazaki N."/>
            <person name="Shinpo S."/>
            <person name="Takeuchi C."/>
            <person name="Wada T."/>
            <person name="Watanabe A."/>
            <person name="Yamada M."/>
            <person name="Yasuda M."/>
            <person name="Tabata S."/>
        </authorList>
    </citation>
    <scope>NUCLEOTIDE SEQUENCE [LARGE SCALE GENOMIC DNA]</scope>
    <source>
        <strain>cv. Columbia</strain>
    </source>
</reference>
<reference key="3">
    <citation type="journal article" date="2017" name="Plant J.">
        <title>Araport11: a complete reannotation of the Arabidopsis thaliana reference genome.</title>
        <authorList>
            <person name="Cheng C.Y."/>
            <person name="Krishnakumar V."/>
            <person name="Chan A.P."/>
            <person name="Thibaud-Nissen F."/>
            <person name="Schobel S."/>
            <person name="Town C.D."/>
        </authorList>
    </citation>
    <scope>GENOME REANNOTATION</scope>
    <source>
        <strain>cv. Columbia</strain>
    </source>
</reference>
<reference key="4">
    <citation type="submission" date="2006-11" db="EMBL/GenBank/DDBJ databases">
        <title>Arabidopsis ORF clones.</title>
        <authorList>
            <person name="Bautista V.R."/>
            <person name="Kim C.J."/>
            <person name="Chen H."/>
            <person name="Quinitio C."/>
            <person name="Ecker J.R."/>
        </authorList>
    </citation>
    <scope>NUCLEOTIDE SEQUENCE [LARGE SCALE MRNA] (ISOFORM 2)</scope>
    <source>
        <strain>cv. Columbia</strain>
    </source>
</reference>
<reference key="5">
    <citation type="submission" date="2002-03" db="EMBL/GenBank/DDBJ databases">
        <title>Full-length cDNA from Arabidopsis thaliana.</title>
        <authorList>
            <person name="Brover V.V."/>
            <person name="Troukhan M.E."/>
            <person name="Alexandrov N.A."/>
            <person name="Lu Y.-P."/>
            <person name="Flavell R.B."/>
            <person name="Feldmann K.A."/>
        </authorList>
    </citation>
    <scope>NUCLEOTIDE SEQUENCE [LARGE SCALE MRNA] (ISOFORM 2)</scope>
</reference>
<comment type="function">
    <text evidence="1">Transcription factor. Interacts specifically with the W box (5'-(T)TGAC[CT]-3'), a frequently occurring elicitor-responsive cis-acting element (By similarity).</text>
</comment>
<comment type="subcellular location">
    <subcellularLocation>
        <location evidence="6">Nucleus</location>
    </subcellularLocation>
</comment>
<comment type="alternative products">
    <event type="alternative splicing"/>
    <isoform>
        <id>Q93WV5-1</id>
        <name>1</name>
        <sequence type="displayed"/>
    </isoform>
    <isoform>
        <id>Q93WV5-2</id>
        <name>2</name>
        <sequence type="described" ref="VSP_008915"/>
    </isoform>
</comment>
<comment type="similarity">
    <text evidence="6">Belongs to the WRKY group II-e family.</text>
</comment>
<comment type="sequence caution" evidence="6">
    <conflict type="erroneous gene model prediction">
        <sequence resource="EMBL-CDS" id="CAB88288"/>
    </conflict>
</comment>
<gene>
    <name type="primary">WRKY69</name>
    <name type="ordered locus">At3g58710</name>
    <name type="ORF">T20N10_60</name>
</gene>
<sequence length="271" mass="30160">MHRRAAIQESDDEEDETYNDVVPESPSSCEDSKISKPTPKKRRNVEKRVVSVPIADVEGSKSRGEVYPPSDSWAWRKYGQKPIKGSPYPRGYYRCSSSKGCPARKQVERSRVDPSKLMITYACDHNHPFPSSSANTKSHHRSSVVLKTAKKEEEYEEEEEELTVTAAEEPPAGLDLSHVDSPLLLGGCYSEIGEFGWFYDASISSSSGSSNFLDVTLERGFSVGQEEDESLFGDLGDLPDCASVFRRGTVATEEQHRRCDFGAIPFCDSSR</sequence>
<proteinExistence type="evidence at transcript level"/>
<feature type="chain" id="PRO_0000133710" description="Probable WRKY transcription factor 69">
    <location>
        <begin position="1"/>
        <end position="271"/>
    </location>
</feature>
<feature type="DNA-binding region" description="WRKY" evidence="2">
    <location>
        <begin position="64"/>
        <end position="130"/>
    </location>
</feature>
<feature type="region of interest" description="Disordered" evidence="3">
    <location>
        <begin position="1"/>
        <end position="47"/>
    </location>
</feature>
<feature type="region of interest" description="Disordered" evidence="3">
    <location>
        <begin position="130"/>
        <end position="166"/>
    </location>
</feature>
<feature type="compositionally biased region" description="Acidic residues" evidence="3">
    <location>
        <begin position="9"/>
        <end position="18"/>
    </location>
</feature>
<feature type="splice variant" id="VSP_008915" description="In isoform 2." evidence="4 5">
    <original>K</original>
    <variation>KS</variation>
    <location>
        <position position="41"/>
    </location>
</feature>
<name>WRK69_ARATH</name>
<protein>
    <recommendedName>
        <fullName>Probable WRKY transcription factor 69</fullName>
    </recommendedName>
    <alternativeName>
        <fullName>WRKY DNA-binding protein 69</fullName>
    </alternativeName>
</protein>
<keyword id="KW-0025">Alternative splicing</keyword>
<keyword id="KW-0238">DNA-binding</keyword>
<keyword id="KW-0539">Nucleus</keyword>
<keyword id="KW-1185">Reference proteome</keyword>
<keyword id="KW-0804">Transcription</keyword>
<keyword id="KW-0805">Transcription regulation</keyword>
<accession>Q93WV5</accession>
<accession>A0JQA0</accession>
<accession>Q8LGJ7</accession>
<accession>Q9LXT0</accession>
<dbReference type="EMBL" id="AF421156">
    <property type="protein sequence ID" value="AAL13045.1"/>
    <property type="molecule type" value="mRNA"/>
</dbReference>
<dbReference type="EMBL" id="AL353032">
    <property type="protein sequence ID" value="CAB88288.1"/>
    <property type="status" value="ALT_SEQ"/>
    <property type="molecule type" value="Genomic_DNA"/>
</dbReference>
<dbReference type="EMBL" id="CP002686">
    <property type="protein sequence ID" value="AEE79820.1"/>
    <property type="molecule type" value="Genomic_DNA"/>
</dbReference>
<dbReference type="EMBL" id="CP002686">
    <property type="protein sequence ID" value="AEE79821.1"/>
    <property type="molecule type" value="Genomic_DNA"/>
</dbReference>
<dbReference type="EMBL" id="BT029470">
    <property type="protein sequence ID" value="ABK59699.1"/>
    <property type="molecule type" value="mRNA"/>
</dbReference>
<dbReference type="EMBL" id="AY084233">
    <property type="protein sequence ID" value="AAM60832.1"/>
    <property type="molecule type" value="mRNA"/>
</dbReference>
<dbReference type="PIR" id="T49154">
    <property type="entry name" value="T49154"/>
</dbReference>
<dbReference type="RefSeq" id="NP_567073.2">
    <molecule id="Q93WV5-1"/>
    <property type="nucleotide sequence ID" value="NM_115733.5"/>
</dbReference>
<dbReference type="RefSeq" id="NP_851020.1">
    <molecule id="Q93WV5-2"/>
    <property type="nucleotide sequence ID" value="NM_180689.3"/>
</dbReference>
<dbReference type="SMR" id="Q93WV5"/>
<dbReference type="BioGRID" id="10355">
    <property type="interactions" value="6"/>
</dbReference>
<dbReference type="FunCoup" id="Q93WV5">
    <property type="interactions" value="3"/>
</dbReference>
<dbReference type="STRING" id="3702.Q93WV5"/>
<dbReference type="PaxDb" id="3702-AT3G58710.1"/>
<dbReference type="ProteomicsDB" id="234292">
    <molecule id="Q93WV5-1"/>
</dbReference>
<dbReference type="EnsemblPlants" id="AT3G58710.1">
    <molecule id="Q93WV5-2"/>
    <property type="protein sequence ID" value="AT3G58710.1"/>
    <property type="gene ID" value="AT3G58710"/>
</dbReference>
<dbReference type="EnsemblPlants" id="AT3G58710.2">
    <molecule id="Q93WV5-1"/>
    <property type="protein sequence ID" value="AT3G58710.2"/>
    <property type="gene ID" value="AT3G58710"/>
</dbReference>
<dbReference type="GeneID" id="825040"/>
<dbReference type="Gramene" id="AT3G58710.1">
    <molecule id="Q93WV5-2"/>
    <property type="protein sequence ID" value="AT3G58710.1"/>
    <property type="gene ID" value="AT3G58710"/>
</dbReference>
<dbReference type="Gramene" id="AT3G58710.2">
    <molecule id="Q93WV5-1"/>
    <property type="protein sequence ID" value="AT3G58710.2"/>
    <property type="gene ID" value="AT3G58710"/>
</dbReference>
<dbReference type="KEGG" id="ath:AT3G58710"/>
<dbReference type="Araport" id="AT3G58710"/>
<dbReference type="TAIR" id="AT3G58710">
    <property type="gene designation" value="WRKY69"/>
</dbReference>
<dbReference type="eggNOG" id="ENOG502RY69">
    <property type="taxonomic scope" value="Eukaryota"/>
</dbReference>
<dbReference type="InParanoid" id="Q93WV5"/>
<dbReference type="OMA" id="EFRWLYD"/>
<dbReference type="OrthoDB" id="773436at2759"/>
<dbReference type="PhylomeDB" id="Q93WV5"/>
<dbReference type="PRO" id="PR:Q93WV5"/>
<dbReference type="Proteomes" id="UP000006548">
    <property type="component" value="Chromosome 3"/>
</dbReference>
<dbReference type="ExpressionAtlas" id="Q93WV5">
    <property type="expression patterns" value="baseline and differential"/>
</dbReference>
<dbReference type="GO" id="GO:0005634">
    <property type="term" value="C:nucleus"/>
    <property type="evidence" value="ECO:0007669"/>
    <property type="project" value="UniProtKB-SubCell"/>
</dbReference>
<dbReference type="GO" id="GO:0003700">
    <property type="term" value="F:DNA-binding transcription factor activity"/>
    <property type="evidence" value="ECO:0000250"/>
    <property type="project" value="TAIR"/>
</dbReference>
<dbReference type="GO" id="GO:0000976">
    <property type="term" value="F:transcription cis-regulatory region binding"/>
    <property type="evidence" value="ECO:0000353"/>
    <property type="project" value="TAIR"/>
</dbReference>
<dbReference type="FunFam" id="2.20.25.80:FF:000004">
    <property type="entry name" value="WRKY transcription factor 65"/>
    <property type="match status" value="1"/>
</dbReference>
<dbReference type="Gene3D" id="2.20.25.80">
    <property type="entry name" value="WRKY domain"/>
    <property type="match status" value="1"/>
</dbReference>
<dbReference type="InterPro" id="IPR003657">
    <property type="entry name" value="WRKY_dom"/>
</dbReference>
<dbReference type="InterPro" id="IPR036576">
    <property type="entry name" value="WRKY_dom_sf"/>
</dbReference>
<dbReference type="InterPro" id="IPR044810">
    <property type="entry name" value="WRKY_plant"/>
</dbReference>
<dbReference type="PANTHER" id="PTHR32096:SF19">
    <property type="entry name" value="OS01G0750100 PROTEIN"/>
    <property type="match status" value="1"/>
</dbReference>
<dbReference type="PANTHER" id="PTHR32096">
    <property type="entry name" value="WRKY TRANSCRIPTION FACTOR 30-RELATED-RELATED"/>
    <property type="match status" value="1"/>
</dbReference>
<dbReference type="Pfam" id="PF03106">
    <property type="entry name" value="WRKY"/>
    <property type="match status" value="1"/>
</dbReference>
<dbReference type="SMART" id="SM00774">
    <property type="entry name" value="WRKY"/>
    <property type="match status" value="1"/>
</dbReference>
<dbReference type="SUPFAM" id="SSF118290">
    <property type="entry name" value="WRKY DNA-binding domain"/>
    <property type="match status" value="1"/>
</dbReference>
<dbReference type="PROSITE" id="PS50811">
    <property type="entry name" value="WRKY"/>
    <property type="match status" value="1"/>
</dbReference>
<organism>
    <name type="scientific">Arabidopsis thaliana</name>
    <name type="common">Mouse-ear cress</name>
    <dbReference type="NCBI Taxonomy" id="3702"/>
    <lineage>
        <taxon>Eukaryota</taxon>
        <taxon>Viridiplantae</taxon>
        <taxon>Streptophyta</taxon>
        <taxon>Embryophyta</taxon>
        <taxon>Tracheophyta</taxon>
        <taxon>Spermatophyta</taxon>
        <taxon>Magnoliopsida</taxon>
        <taxon>eudicotyledons</taxon>
        <taxon>Gunneridae</taxon>
        <taxon>Pentapetalae</taxon>
        <taxon>rosids</taxon>
        <taxon>malvids</taxon>
        <taxon>Brassicales</taxon>
        <taxon>Brassicaceae</taxon>
        <taxon>Camelineae</taxon>
        <taxon>Arabidopsis</taxon>
    </lineage>
</organism>
<evidence type="ECO:0000250" key="1"/>
<evidence type="ECO:0000255" key="2">
    <source>
        <dbReference type="PROSITE-ProRule" id="PRU00223"/>
    </source>
</evidence>
<evidence type="ECO:0000256" key="3">
    <source>
        <dbReference type="SAM" id="MobiDB-lite"/>
    </source>
</evidence>
<evidence type="ECO:0000303" key="4">
    <source ref="4"/>
</evidence>
<evidence type="ECO:0000303" key="5">
    <source ref="5"/>
</evidence>
<evidence type="ECO:0000305" key="6"/>